<accession>Q7V5R7</accession>
<dbReference type="EMBL" id="BX548175">
    <property type="protein sequence ID" value="CAE21652.1"/>
    <property type="molecule type" value="Genomic_DNA"/>
</dbReference>
<dbReference type="RefSeq" id="WP_011130845.1">
    <property type="nucleotide sequence ID" value="NC_005071.1"/>
</dbReference>
<dbReference type="KEGG" id="pmt:PMT_1477"/>
<dbReference type="eggNOG" id="COG1333">
    <property type="taxonomic scope" value="Bacteria"/>
</dbReference>
<dbReference type="HOGENOM" id="CLU_034630_0_0_3"/>
<dbReference type="OrthoDB" id="9770923at2"/>
<dbReference type="Proteomes" id="UP000001423">
    <property type="component" value="Chromosome"/>
</dbReference>
<dbReference type="GO" id="GO:0031676">
    <property type="term" value="C:plasma membrane-derived thylakoid membrane"/>
    <property type="evidence" value="ECO:0007669"/>
    <property type="project" value="UniProtKB-SubCell"/>
</dbReference>
<dbReference type="GO" id="GO:0017004">
    <property type="term" value="P:cytochrome complex assembly"/>
    <property type="evidence" value="ECO:0007669"/>
    <property type="project" value="UniProtKB-UniRule"/>
</dbReference>
<dbReference type="HAMAP" id="MF_01392">
    <property type="entry name" value="CytC_Ccs1"/>
    <property type="match status" value="1"/>
</dbReference>
<dbReference type="InterPro" id="IPR023494">
    <property type="entry name" value="Cyt_c_bgen_Ccs1/CcsB/ResB"/>
</dbReference>
<dbReference type="InterPro" id="IPR007816">
    <property type="entry name" value="ResB-like_domain"/>
</dbReference>
<dbReference type="PANTHER" id="PTHR31566">
    <property type="entry name" value="CYTOCHROME C BIOGENESIS PROTEIN CCS1, CHLOROPLASTIC"/>
    <property type="match status" value="1"/>
</dbReference>
<dbReference type="PANTHER" id="PTHR31566:SF0">
    <property type="entry name" value="CYTOCHROME C BIOGENESIS PROTEIN CCS1, CHLOROPLASTIC"/>
    <property type="match status" value="1"/>
</dbReference>
<dbReference type="Pfam" id="PF05140">
    <property type="entry name" value="ResB"/>
    <property type="match status" value="2"/>
</dbReference>
<name>CCS1_PROMM</name>
<reference key="1">
    <citation type="journal article" date="2003" name="Nature">
        <title>Genome divergence in two Prochlorococcus ecotypes reflects oceanic niche differentiation.</title>
        <authorList>
            <person name="Rocap G."/>
            <person name="Larimer F.W."/>
            <person name="Lamerdin J.E."/>
            <person name="Malfatti S."/>
            <person name="Chain P."/>
            <person name="Ahlgren N.A."/>
            <person name="Arellano A."/>
            <person name="Coleman M."/>
            <person name="Hauser L."/>
            <person name="Hess W.R."/>
            <person name="Johnson Z.I."/>
            <person name="Land M.L."/>
            <person name="Lindell D."/>
            <person name="Post A.F."/>
            <person name="Regala W."/>
            <person name="Shah M."/>
            <person name="Shaw S.L."/>
            <person name="Steglich C."/>
            <person name="Sullivan M.B."/>
            <person name="Ting C.S."/>
            <person name="Tolonen A."/>
            <person name="Webb E.A."/>
            <person name="Zinser E.R."/>
            <person name="Chisholm S.W."/>
        </authorList>
    </citation>
    <scope>NUCLEOTIDE SEQUENCE [LARGE SCALE GENOMIC DNA]</scope>
    <source>
        <strain>MIT 9313</strain>
    </source>
</reference>
<comment type="function">
    <text evidence="1">Required during biogenesis of c-type cytochromes (cytochrome c6 and cytochrome f) at the step of heme attachment.</text>
</comment>
<comment type="subunit">
    <text evidence="1">May interact with CcsA.</text>
</comment>
<comment type="subcellular location">
    <subcellularLocation>
        <location evidence="1">Cellular thylakoid membrane</location>
        <topology evidence="1">Multi-pass membrane protein</topology>
    </subcellularLocation>
</comment>
<comment type="similarity">
    <text evidence="1">Belongs to the Ccs1/CcsB family.</text>
</comment>
<sequence>MATFKRLLAWISDLRIAIGLLLVIALASALGTAIPQGELRESYLEGYSDKPWLGFVNGSMILRLQLDHVYTSSWFLALLAWLGLALILCSWRRQWPALQAALQWIDYQEPRQLSKLAIAETISSPPKNESIDKLAAHLHQQGWQVQQQPGRLAARRGIIGRAGPMLVHLGLVLLMLGAVWGSLGGNRLEQFLAPGRSLDLLNRDGNSHLKLTLTNFGIERDPAGRPEQFRSQLELLEPGQDTAKLHEVSVNHPLRFHGLTVYQADWSLAAITLQLGRSPQLQLPLRTFPELGEQVWGLVLPTNPDGSEPVLLSLTSEAGPVQVFDATGERLASLRPAGPTAEVKGIPIRIVDVLPASGLLLKRDPGVPLVYIGFLITLVGGGLSMIATRQLWAVGDPENECLHVGGLCNRNLTGFANELPSLLAAAVPQQ</sequence>
<keyword id="KW-0201">Cytochrome c-type biogenesis</keyword>
<keyword id="KW-0472">Membrane</keyword>
<keyword id="KW-1185">Reference proteome</keyword>
<keyword id="KW-0793">Thylakoid</keyword>
<keyword id="KW-0812">Transmembrane</keyword>
<keyword id="KW-1133">Transmembrane helix</keyword>
<evidence type="ECO:0000255" key="1">
    <source>
        <dbReference type="HAMAP-Rule" id="MF_01392"/>
    </source>
</evidence>
<feature type="chain" id="PRO_5000096807" description="Cytochrome c biogenesis protein CcsB">
    <location>
        <begin position="1"/>
        <end position="430"/>
    </location>
</feature>
<feature type="transmembrane region" description="Helical" evidence="1">
    <location>
        <begin position="14"/>
        <end position="34"/>
    </location>
</feature>
<feature type="transmembrane region" description="Helical" evidence="1">
    <location>
        <begin position="72"/>
        <end position="92"/>
    </location>
</feature>
<feature type="transmembrane region" description="Helical" evidence="1">
    <location>
        <begin position="162"/>
        <end position="182"/>
    </location>
</feature>
<organism>
    <name type="scientific">Prochlorococcus marinus (strain MIT 9313)</name>
    <dbReference type="NCBI Taxonomy" id="74547"/>
    <lineage>
        <taxon>Bacteria</taxon>
        <taxon>Bacillati</taxon>
        <taxon>Cyanobacteriota</taxon>
        <taxon>Cyanophyceae</taxon>
        <taxon>Synechococcales</taxon>
        <taxon>Prochlorococcaceae</taxon>
        <taxon>Prochlorococcus</taxon>
    </lineage>
</organism>
<gene>
    <name evidence="1" type="primary">ccsB</name>
    <name evidence="1" type="synonym">ccs1</name>
    <name type="ordered locus">PMT_1477</name>
</gene>
<protein>
    <recommendedName>
        <fullName evidence="1">Cytochrome c biogenesis protein CcsB</fullName>
    </recommendedName>
</protein>
<proteinExistence type="inferred from homology"/>